<accession>Q9DEA3</accession>
<organism>
    <name type="scientific">Gallus gallus</name>
    <name type="common">Chicken</name>
    <dbReference type="NCBI Taxonomy" id="9031"/>
    <lineage>
        <taxon>Eukaryota</taxon>
        <taxon>Metazoa</taxon>
        <taxon>Chordata</taxon>
        <taxon>Craniata</taxon>
        <taxon>Vertebrata</taxon>
        <taxon>Euteleostomi</taxon>
        <taxon>Archelosauria</taxon>
        <taxon>Archosauria</taxon>
        <taxon>Dinosauria</taxon>
        <taxon>Saurischia</taxon>
        <taxon>Theropoda</taxon>
        <taxon>Coelurosauria</taxon>
        <taxon>Aves</taxon>
        <taxon>Neognathae</taxon>
        <taxon>Galloanserae</taxon>
        <taxon>Galliformes</taxon>
        <taxon>Phasianidae</taxon>
        <taxon>Phasianinae</taxon>
        <taxon>Gallus</taxon>
    </lineage>
</organism>
<protein>
    <recommendedName>
        <fullName>Proliferating cell nuclear antigen</fullName>
        <shortName>PCNA</shortName>
    </recommendedName>
</protein>
<feature type="chain" id="PRO_0000149163" description="Proliferating cell nuclear antigen">
    <location>
        <begin position="1"/>
        <end position="262"/>
    </location>
</feature>
<feature type="DNA-binding region" evidence="3">
    <location>
        <begin position="61"/>
        <end position="80"/>
    </location>
</feature>
<feature type="cross-link" description="Glycyl lysine isopeptide (Lys-Gly) (interchain with G-Cter in ubiquitin)" evidence="1">
    <location>
        <position position="164"/>
    </location>
</feature>
<reference key="1">
    <citation type="journal article" date="2001" name="Chromosoma">
        <title>Co-localization of chicken DNA topoisomerase IIalpha, but not beta, with sites of DNA replication and possible involvement of a C-terminal region of alpha through its binding to PCNA.</title>
        <authorList>
            <person name="Niimi A."/>
            <person name="Suka N."/>
            <person name="Harata M."/>
            <person name="Kikuchi A."/>
            <person name="Mizuno S."/>
        </authorList>
    </citation>
    <scope>NUCLEOTIDE SEQUENCE [MRNA]</scope>
    <scope>IN VITRO BINDING TO TOP2A</scope>
</reference>
<reference key="2">
    <citation type="journal article" date="1997" name="Science">
        <title>Human DNA-(cytosine-5) methyltransferase-PCNA complex as a target for p21WAF1.</title>
        <authorList>
            <person name="Chuang L.S.-H."/>
            <person name="Ian H.-I."/>
            <person name="Koh T.-W."/>
            <person name="Ng H.-H."/>
            <person name="Xu G."/>
            <person name="Li B.F.L."/>
        </authorList>
    </citation>
    <scope>INTERACTION WITH DNMT1</scope>
</reference>
<reference key="3">
    <citation type="journal article" date="2007" name="Mol. Biol. Cell">
        <title>Essential role of chromatin assembly factor-1-mediated rapid nucleosome assembly for DNA replication and cell division in vertebrate cells.</title>
        <authorList>
            <person name="Takami Y."/>
            <person name="Ono T."/>
            <person name="Fukagawa T."/>
            <person name="Shibahara K."/>
            <person name="Nakayama T."/>
        </authorList>
    </citation>
    <scope>INTERACTION WITH CHAF1A</scope>
</reference>
<dbReference type="EMBL" id="AB053163">
    <property type="protein sequence ID" value="BAB20424.1"/>
    <property type="molecule type" value="mRNA"/>
</dbReference>
<dbReference type="RefSeq" id="NP_989501.1">
    <property type="nucleotide sequence ID" value="NM_204170.3"/>
</dbReference>
<dbReference type="SMR" id="Q9DEA3"/>
<dbReference type="BioGRID" id="675031">
    <property type="interactions" value="3"/>
</dbReference>
<dbReference type="FunCoup" id="Q9DEA3">
    <property type="interactions" value="3083"/>
</dbReference>
<dbReference type="STRING" id="9031.ENSGALP00000064149"/>
<dbReference type="iPTMnet" id="Q9DEA3"/>
<dbReference type="PaxDb" id="9031-ENSGALP00000000224"/>
<dbReference type="GeneID" id="373984"/>
<dbReference type="KEGG" id="gga:373984"/>
<dbReference type="CTD" id="5111"/>
<dbReference type="VEuPathDB" id="HostDB:geneid_373984"/>
<dbReference type="eggNOG" id="KOG1636">
    <property type="taxonomic scope" value="Eukaryota"/>
</dbReference>
<dbReference type="HOGENOM" id="CLU_043978_3_0_1"/>
<dbReference type="InParanoid" id="Q9DEA3"/>
<dbReference type="OMA" id="EMKLINM"/>
<dbReference type="OrthoDB" id="534348at2759"/>
<dbReference type="PhylomeDB" id="Q9DEA3"/>
<dbReference type="Reactome" id="R-GGA-110312">
    <property type="pathway name" value="Translesion synthesis by REV1"/>
</dbReference>
<dbReference type="Reactome" id="R-GGA-110314">
    <property type="pathway name" value="Recognition of DNA damage by PCNA-containing replication complex"/>
</dbReference>
<dbReference type="Reactome" id="R-GGA-110320">
    <property type="pathway name" value="Translesion Synthesis by POLH"/>
</dbReference>
<dbReference type="Reactome" id="R-GGA-174411">
    <property type="pathway name" value="Polymerase switching on the C-strand of the telomere"/>
</dbReference>
<dbReference type="Reactome" id="R-GGA-353299">
    <property type="pathway name" value="RAD18 and ubiquitinated PCNA-mediated recruitment of translesion polymerases"/>
</dbReference>
<dbReference type="Reactome" id="R-GGA-353303">
    <property type="pathway name" value="Nucleotide Excision Repair"/>
</dbReference>
<dbReference type="Reactome" id="R-GGA-4615885">
    <property type="pathway name" value="SUMOylation of DNA replication proteins"/>
</dbReference>
<dbReference type="Reactome" id="R-GGA-5358565">
    <property type="pathway name" value="Mismatch repair (MMR) directed by MSH2:MSH6 (MutSalpha)"/>
</dbReference>
<dbReference type="Reactome" id="R-GGA-5655862">
    <property type="pathway name" value="Translesion synthesis by POLK"/>
</dbReference>
<dbReference type="Reactome" id="R-GGA-5656121">
    <property type="pathway name" value="Translesion synthesis by POLI"/>
</dbReference>
<dbReference type="Reactome" id="R-GGA-5656169">
    <property type="pathway name" value="Termination of translesion DNA synthesis"/>
</dbReference>
<dbReference type="Reactome" id="R-GGA-5685942">
    <property type="pathway name" value="HDR through Homologous Recombination (HRR)"/>
</dbReference>
<dbReference type="Reactome" id="R-GGA-5696397">
    <property type="pathway name" value="Gap-filling DNA repair synthesis and ligation in GG-NER"/>
</dbReference>
<dbReference type="Reactome" id="R-GGA-5696400">
    <property type="pathway name" value="Dual Incision in GG-NER"/>
</dbReference>
<dbReference type="Reactome" id="R-GGA-6782135">
    <property type="pathway name" value="Dual incision in TC-NER"/>
</dbReference>
<dbReference type="Reactome" id="R-GGA-6782210">
    <property type="pathway name" value="Gap-filling DNA repair synthesis and ligation in TC-NER"/>
</dbReference>
<dbReference type="Reactome" id="R-GGA-6804114">
    <property type="pathway name" value="TP53 Regulates Transcription of Genes Involved in G2 Cell Cycle Arrest"/>
</dbReference>
<dbReference type="Reactome" id="R-GGA-69091">
    <property type="pathway name" value="Polymerase switching"/>
</dbReference>
<dbReference type="Reactome" id="R-GGA-8866654">
    <property type="pathway name" value="E3 ubiquitin ligases ubiquitinate target proteins"/>
</dbReference>
<dbReference type="PRO" id="PR:Q9DEA3"/>
<dbReference type="Proteomes" id="UP000000539">
    <property type="component" value="Chromosome 22"/>
</dbReference>
<dbReference type="Bgee" id="ENSGALG00000029292">
    <property type="expression patterns" value="Expressed in spermatid and 13 other cell types or tissues"/>
</dbReference>
<dbReference type="GO" id="GO:0000785">
    <property type="term" value="C:chromatin"/>
    <property type="evidence" value="ECO:0000250"/>
    <property type="project" value="UniProtKB"/>
</dbReference>
<dbReference type="GO" id="GO:0005654">
    <property type="term" value="C:nucleoplasm"/>
    <property type="evidence" value="ECO:0000304"/>
    <property type="project" value="Reactome"/>
</dbReference>
<dbReference type="GO" id="GO:0005634">
    <property type="term" value="C:nucleus"/>
    <property type="evidence" value="ECO:0000314"/>
    <property type="project" value="AgBase"/>
</dbReference>
<dbReference type="GO" id="GO:0043626">
    <property type="term" value="C:PCNA complex"/>
    <property type="evidence" value="ECO:0000318"/>
    <property type="project" value="GO_Central"/>
</dbReference>
<dbReference type="GO" id="GO:0070557">
    <property type="term" value="C:PCNA-p21 complex"/>
    <property type="evidence" value="ECO:0000250"/>
    <property type="project" value="UniProtKB"/>
</dbReference>
<dbReference type="GO" id="GO:0003682">
    <property type="term" value="F:chromatin binding"/>
    <property type="evidence" value="ECO:0000250"/>
    <property type="project" value="UniProtKB"/>
</dbReference>
<dbReference type="GO" id="GO:0003677">
    <property type="term" value="F:DNA binding"/>
    <property type="evidence" value="ECO:0007669"/>
    <property type="project" value="UniProtKB-KW"/>
</dbReference>
<dbReference type="GO" id="GO:0030337">
    <property type="term" value="F:DNA polymerase processivity factor activity"/>
    <property type="evidence" value="ECO:0000318"/>
    <property type="project" value="GO_Central"/>
</dbReference>
<dbReference type="GO" id="GO:0019899">
    <property type="term" value="F:enzyme binding"/>
    <property type="evidence" value="ECO:0000353"/>
    <property type="project" value="AgBase"/>
</dbReference>
<dbReference type="GO" id="GO:0006272">
    <property type="term" value="P:leading strand elongation"/>
    <property type="evidence" value="ECO:0000318"/>
    <property type="project" value="GO_Central"/>
</dbReference>
<dbReference type="GO" id="GO:0006298">
    <property type="term" value="P:mismatch repair"/>
    <property type="evidence" value="ECO:0000318"/>
    <property type="project" value="GO_Central"/>
</dbReference>
<dbReference type="GO" id="GO:0006275">
    <property type="term" value="P:regulation of DNA replication"/>
    <property type="evidence" value="ECO:0007669"/>
    <property type="project" value="InterPro"/>
</dbReference>
<dbReference type="GO" id="GO:0019985">
    <property type="term" value="P:translesion synthesis"/>
    <property type="evidence" value="ECO:0000250"/>
    <property type="project" value="UniProtKB"/>
</dbReference>
<dbReference type="CDD" id="cd00577">
    <property type="entry name" value="PCNA"/>
    <property type="match status" value="1"/>
</dbReference>
<dbReference type="FunFam" id="3.10.150.10:FF:000006">
    <property type="entry name" value="Proliferating cell nuclear antigen"/>
    <property type="match status" value="1"/>
</dbReference>
<dbReference type="FunFam" id="3.10.150.10:FF:000008">
    <property type="entry name" value="Proliferating cell nuclear antigen"/>
    <property type="match status" value="1"/>
</dbReference>
<dbReference type="FunFam" id="3.70.10.10:FF:000001">
    <property type="entry name" value="Proliferating cell nuclear antigen"/>
    <property type="match status" value="1"/>
</dbReference>
<dbReference type="Gene3D" id="3.70.10.10">
    <property type="match status" value="1"/>
</dbReference>
<dbReference type="HAMAP" id="MF_00317">
    <property type="entry name" value="DNApol_clamp_arch"/>
    <property type="match status" value="1"/>
</dbReference>
<dbReference type="InterPro" id="IPR046938">
    <property type="entry name" value="DNA_clamp_sf"/>
</dbReference>
<dbReference type="InterPro" id="IPR000730">
    <property type="entry name" value="Pr_cel_nuc_antig"/>
</dbReference>
<dbReference type="InterPro" id="IPR022649">
    <property type="entry name" value="Pr_cel_nuc_antig_C"/>
</dbReference>
<dbReference type="InterPro" id="IPR022659">
    <property type="entry name" value="Pr_cel_nuc_antig_CS"/>
</dbReference>
<dbReference type="InterPro" id="IPR022648">
    <property type="entry name" value="Pr_cel_nuc_antig_N"/>
</dbReference>
<dbReference type="NCBIfam" id="TIGR00590">
    <property type="entry name" value="pcna"/>
    <property type="match status" value="1"/>
</dbReference>
<dbReference type="PANTHER" id="PTHR11352">
    <property type="entry name" value="PROLIFERATING CELL NUCLEAR ANTIGEN"/>
    <property type="match status" value="1"/>
</dbReference>
<dbReference type="PANTHER" id="PTHR11352:SF0">
    <property type="entry name" value="PROLIFERATING CELL NUCLEAR ANTIGEN"/>
    <property type="match status" value="1"/>
</dbReference>
<dbReference type="Pfam" id="PF02747">
    <property type="entry name" value="PCNA_C"/>
    <property type="match status" value="1"/>
</dbReference>
<dbReference type="Pfam" id="PF00705">
    <property type="entry name" value="PCNA_N"/>
    <property type="match status" value="1"/>
</dbReference>
<dbReference type="PRINTS" id="PR00339">
    <property type="entry name" value="PCNACYCLIN"/>
</dbReference>
<dbReference type="SUPFAM" id="SSF55979">
    <property type="entry name" value="DNA clamp"/>
    <property type="match status" value="2"/>
</dbReference>
<dbReference type="PROSITE" id="PS01251">
    <property type="entry name" value="PCNA_1"/>
    <property type="match status" value="1"/>
</dbReference>
<dbReference type="PROSITE" id="PS00293">
    <property type="entry name" value="PCNA_2"/>
    <property type="match status" value="1"/>
</dbReference>
<comment type="function">
    <text evidence="1">This protein is an auxiliary protein of DNA polymerase delta and is involved in the control of eukaryotic DNA replication by increasing the polymerase's processibility during elongation of the leading strand.</text>
</comment>
<comment type="subunit">
    <text evidence="1 2 4 5">Homotrimer. Forms a complex with activator 1 heteropentamer in the presence of ATP. Interacts with DNMT1 (By similarity). Interacts with CHAF1A. Component of the replisome complex (By similarity).</text>
</comment>
<comment type="subcellular location">
    <subcellularLocation>
        <location evidence="2">Nucleus</location>
    </subcellularLocation>
</comment>
<comment type="PTM">
    <text evidence="1">Monoubiquitinated by the UBE2B-RAD18 complex on Lys-164. Monoubiquitination at Lys-164 also takes place in undamaged proliferating cells, and is mediated by the DCX(DTL) complex, leading to enhance PCNA-dependent translesion DNA synthesis (By similarity).</text>
</comment>
<comment type="similarity">
    <text evidence="6">Belongs to the PCNA family.</text>
</comment>
<name>PCNA_CHICK</name>
<proteinExistence type="evidence at protein level"/>
<keyword id="KW-0235">DNA replication</keyword>
<keyword id="KW-0238">DNA-binding</keyword>
<keyword id="KW-1017">Isopeptide bond</keyword>
<keyword id="KW-0539">Nucleus</keyword>
<keyword id="KW-1185">Reference proteome</keyword>
<keyword id="KW-0832">Ubl conjugation</keyword>
<gene>
    <name type="primary">PCNA</name>
</gene>
<sequence>MFEARLVQGSVLKRVLEALKDLITEACWDLGSGGISLQSMDSSHVSLVQLTLRSEGFDTYRCDRNIAMGVNLNSMSKILKCAGNEDIITLRAEDNADTLALVFEAPNQEKVSDYEMKLMDLDVEQLGIPEQEYSCVVKMPSAEFARICRDLSHIGDAVVISCAKDGVKFSANGELGNGNIKLSQTSNVDKEEEAVTIEMNEPVQLTFALRYLNFFTKATPLSPTVTLSMSADVPLVVEYKIADMGHLKYYLAPKIEDQQEGS</sequence>
<evidence type="ECO:0000250" key="1"/>
<evidence type="ECO:0000250" key="2">
    <source>
        <dbReference type="UniProtKB" id="P12004"/>
    </source>
</evidence>
<evidence type="ECO:0000255" key="3"/>
<evidence type="ECO:0000269" key="4">
    <source>
    </source>
</evidence>
<evidence type="ECO:0000269" key="5">
    <source>
    </source>
</evidence>
<evidence type="ECO:0000305" key="6"/>